<keyword id="KW-0240">DNA-directed RNA polymerase</keyword>
<keyword id="KW-0548">Nucleotidyltransferase</keyword>
<keyword id="KW-1185">Reference proteome</keyword>
<keyword id="KW-0804">Transcription</keyword>
<keyword id="KW-0808">Transferase</keyword>
<name>RPOZ_PSESM</name>
<reference key="1">
    <citation type="journal article" date="2003" name="Proc. Natl. Acad. Sci. U.S.A.">
        <title>The complete genome sequence of the Arabidopsis and tomato pathogen Pseudomonas syringae pv. tomato DC3000.</title>
        <authorList>
            <person name="Buell C.R."/>
            <person name="Joardar V."/>
            <person name="Lindeberg M."/>
            <person name="Selengut J."/>
            <person name="Paulsen I.T."/>
            <person name="Gwinn M.L."/>
            <person name="Dodson R.J."/>
            <person name="DeBoy R.T."/>
            <person name="Durkin A.S."/>
            <person name="Kolonay J.F."/>
            <person name="Madupu R."/>
            <person name="Daugherty S.C."/>
            <person name="Brinkac L.M."/>
            <person name="Beanan M.J."/>
            <person name="Haft D.H."/>
            <person name="Nelson W.C."/>
            <person name="Davidsen T.M."/>
            <person name="Zafar N."/>
            <person name="Zhou L."/>
            <person name="Liu J."/>
            <person name="Yuan Q."/>
            <person name="Khouri H.M."/>
            <person name="Fedorova N.B."/>
            <person name="Tran B."/>
            <person name="Russell D."/>
            <person name="Berry K.J."/>
            <person name="Utterback T.R."/>
            <person name="Van Aken S.E."/>
            <person name="Feldblyum T.V."/>
            <person name="D'Ascenzo M."/>
            <person name="Deng W.-L."/>
            <person name="Ramos A.R."/>
            <person name="Alfano J.R."/>
            <person name="Cartinhour S."/>
            <person name="Chatterjee A.K."/>
            <person name="Delaney T.P."/>
            <person name="Lazarowitz S.G."/>
            <person name="Martin G.B."/>
            <person name="Schneider D.J."/>
            <person name="Tang X."/>
            <person name="Bender C.L."/>
            <person name="White O."/>
            <person name="Fraser C.M."/>
            <person name="Collmer A."/>
        </authorList>
    </citation>
    <scope>NUCLEOTIDE SEQUENCE [LARGE SCALE GENOMIC DNA]</scope>
    <source>
        <strain>ATCC BAA-871 / DC3000</strain>
    </source>
</reference>
<dbReference type="EC" id="2.7.7.6" evidence="1"/>
<dbReference type="EMBL" id="AE016853">
    <property type="protein sequence ID" value="AAO53628.1"/>
    <property type="molecule type" value="Genomic_DNA"/>
</dbReference>
<dbReference type="RefSeq" id="NP_789933.1">
    <property type="nucleotide sequence ID" value="NC_004578.1"/>
</dbReference>
<dbReference type="RefSeq" id="WP_002551500.1">
    <property type="nucleotide sequence ID" value="NC_004578.1"/>
</dbReference>
<dbReference type="SMR" id="Q88BE3"/>
<dbReference type="STRING" id="223283.PSPTO_0074"/>
<dbReference type="GeneID" id="73733202"/>
<dbReference type="KEGG" id="pst:PSPTO_0074"/>
<dbReference type="PATRIC" id="fig|223283.9.peg.77"/>
<dbReference type="eggNOG" id="COG1758">
    <property type="taxonomic scope" value="Bacteria"/>
</dbReference>
<dbReference type="HOGENOM" id="CLU_125406_5_2_6"/>
<dbReference type="OrthoDB" id="9796300at2"/>
<dbReference type="PhylomeDB" id="Q88BE3"/>
<dbReference type="Proteomes" id="UP000002515">
    <property type="component" value="Chromosome"/>
</dbReference>
<dbReference type="GO" id="GO:0000428">
    <property type="term" value="C:DNA-directed RNA polymerase complex"/>
    <property type="evidence" value="ECO:0007669"/>
    <property type="project" value="UniProtKB-KW"/>
</dbReference>
<dbReference type="GO" id="GO:0003677">
    <property type="term" value="F:DNA binding"/>
    <property type="evidence" value="ECO:0007669"/>
    <property type="project" value="UniProtKB-UniRule"/>
</dbReference>
<dbReference type="GO" id="GO:0003899">
    <property type="term" value="F:DNA-directed RNA polymerase activity"/>
    <property type="evidence" value="ECO:0007669"/>
    <property type="project" value="UniProtKB-UniRule"/>
</dbReference>
<dbReference type="GO" id="GO:0006351">
    <property type="term" value="P:DNA-templated transcription"/>
    <property type="evidence" value="ECO:0007669"/>
    <property type="project" value="UniProtKB-UniRule"/>
</dbReference>
<dbReference type="Gene3D" id="3.90.940.10">
    <property type="match status" value="1"/>
</dbReference>
<dbReference type="HAMAP" id="MF_00366">
    <property type="entry name" value="RNApol_bact_RpoZ"/>
    <property type="match status" value="1"/>
</dbReference>
<dbReference type="InterPro" id="IPR003716">
    <property type="entry name" value="DNA-dir_RNA_pol_omega"/>
</dbReference>
<dbReference type="InterPro" id="IPR006110">
    <property type="entry name" value="Pol_omega/Rpo6/RPB6"/>
</dbReference>
<dbReference type="InterPro" id="IPR036161">
    <property type="entry name" value="RPB6/omega-like_sf"/>
</dbReference>
<dbReference type="NCBIfam" id="TIGR00690">
    <property type="entry name" value="rpoZ"/>
    <property type="match status" value="1"/>
</dbReference>
<dbReference type="PANTHER" id="PTHR34476">
    <property type="entry name" value="DNA-DIRECTED RNA POLYMERASE SUBUNIT OMEGA"/>
    <property type="match status" value="1"/>
</dbReference>
<dbReference type="PANTHER" id="PTHR34476:SF1">
    <property type="entry name" value="DNA-DIRECTED RNA POLYMERASE SUBUNIT OMEGA"/>
    <property type="match status" value="1"/>
</dbReference>
<dbReference type="Pfam" id="PF01192">
    <property type="entry name" value="RNA_pol_Rpb6"/>
    <property type="match status" value="1"/>
</dbReference>
<dbReference type="SMART" id="SM01409">
    <property type="entry name" value="RNA_pol_Rpb6"/>
    <property type="match status" value="1"/>
</dbReference>
<dbReference type="SUPFAM" id="SSF63562">
    <property type="entry name" value="RPB6/omega subunit-like"/>
    <property type="match status" value="1"/>
</dbReference>
<evidence type="ECO:0000255" key="1">
    <source>
        <dbReference type="HAMAP-Rule" id="MF_00366"/>
    </source>
</evidence>
<sequence>MARVTVEDCLEHVDNRFELVMLSTKRARQLATGGKEPKLAWENDKPTVMALREIAAGLMDYAVIAEAEIVEDEPLFAAFEDESNEAV</sequence>
<feature type="chain" id="PRO_0000128965" description="DNA-directed RNA polymerase subunit omega">
    <location>
        <begin position="1"/>
        <end position="87"/>
    </location>
</feature>
<proteinExistence type="inferred from homology"/>
<organism>
    <name type="scientific">Pseudomonas syringae pv. tomato (strain ATCC BAA-871 / DC3000)</name>
    <dbReference type="NCBI Taxonomy" id="223283"/>
    <lineage>
        <taxon>Bacteria</taxon>
        <taxon>Pseudomonadati</taxon>
        <taxon>Pseudomonadota</taxon>
        <taxon>Gammaproteobacteria</taxon>
        <taxon>Pseudomonadales</taxon>
        <taxon>Pseudomonadaceae</taxon>
        <taxon>Pseudomonas</taxon>
    </lineage>
</organism>
<gene>
    <name evidence="1" type="primary">rpoZ</name>
    <name type="ordered locus">PSPTO_0074</name>
</gene>
<comment type="function">
    <text evidence="1">Promotes RNA polymerase assembly. Latches the N- and C-terminal regions of the beta' subunit thereby facilitating its interaction with the beta and alpha subunits.</text>
</comment>
<comment type="catalytic activity">
    <reaction evidence="1">
        <text>RNA(n) + a ribonucleoside 5'-triphosphate = RNA(n+1) + diphosphate</text>
        <dbReference type="Rhea" id="RHEA:21248"/>
        <dbReference type="Rhea" id="RHEA-COMP:14527"/>
        <dbReference type="Rhea" id="RHEA-COMP:17342"/>
        <dbReference type="ChEBI" id="CHEBI:33019"/>
        <dbReference type="ChEBI" id="CHEBI:61557"/>
        <dbReference type="ChEBI" id="CHEBI:140395"/>
        <dbReference type="EC" id="2.7.7.6"/>
    </reaction>
</comment>
<comment type="subunit">
    <text evidence="1">The RNAP catalytic core consists of 2 alpha, 1 beta, 1 beta' and 1 omega subunit. When a sigma factor is associated with the core the holoenzyme is formed, which can initiate transcription.</text>
</comment>
<comment type="similarity">
    <text evidence="1">Belongs to the RNA polymerase subunit omega family.</text>
</comment>
<protein>
    <recommendedName>
        <fullName evidence="1">DNA-directed RNA polymerase subunit omega</fullName>
        <shortName evidence="1">RNAP omega subunit</shortName>
        <ecNumber evidence="1">2.7.7.6</ecNumber>
    </recommendedName>
    <alternativeName>
        <fullName evidence="1">RNA polymerase omega subunit</fullName>
    </alternativeName>
    <alternativeName>
        <fullName evidence="1">Transcriptase subunit omega</fullName>
    </alternativeName>
</protein>
<accession>Q88BE3</accession>